<protein>
    <recommendedName>
        <fullName evidence="1">Uracil phosphoribosyltransferase</fullName>
        <ecNumber evidence="1">2.4.2.9</ecNumber>
    </recommendedName>
    <alternativeName>
        <fullName evidence="1">UMP pyrophosphorylase</fullName>
    </alternativeName>
    <alternativeName>
        <fullName evidence="1">UPRTase</fullName>
    </alternativeName>
</protein>
<sequence>MPLYVIDKPLTLHILTQLRDKNTDQINFRKNLVRLGRILGYEIANTLDYEIVEVETPLGARTKGIDITDLNNIVIINILRAAVPLVEGLLKAFPKARQGVIGASRVEVDGKEVPKDMDVYIYYKKIPNIRAKVDNVIIADPMIATASTMLKVLEEVVRANPKRIYIVSIISSEYGANKILSKYPFIYLFTVTIDPELNNKGYILPGLGDAGDRAFG</sequence>
<name>UPP_SACI4</name>
<gene>
    <name evidence="1" type="primary">upp</name>
    <name type="ordered locus">M1425_1905</name>
</gene>
<dbReference type="EC" id="2.4.2.9" evidence="1"/>
<dbReference type="EMBL" id="CP001400">
    <property type="protein sequence ID" value="ACP38649.1"/>
    <property type="molecule type" value="Genomic_DNA"/>
</dbReference>
<dbReference type="RefSeq" id="WP_012711878.1">
    <property type="nucleotide sequence ID" value="NC_012588.1"/>
</dbReference>
<dbReference type="SMR" id="C3MY92"/>
<dbReference type="GeneID" id="84059260"/>
<dbReference type="KEGG" id="sia:M1425_1905"/>
<dbReference type="HOGENOM" id="CLU_067096_2_0_2"/>
<dbReference type="UniPathway" id="UPA00574">
    <property type="reaction ID" value="UER00636"/>
</dbReference>
<dbReference type="Proteomes" id="UP000001350">
    <property type="component" value="Chromosome"/>
</dbReference>
<dbReference type="GO" id="GO:0005525">
    <property type="term" value="F:GTP binding"/>
    <property type="evidence" value="ECO:0007669"/>
    <property type="project" value="UniProtKB-KW"/>
</dbReference>
<dbReference type="GO" id="GO:0000287">
    <property type="term" value="F:magnesium ion binding"/>
    <property type="evidence" value="ECO:0007669"/>
    <property type="project" value="UniProtKB-UniRule"/>
</dbReference>
<dbReference type="GO" id="GO:0004845">
    <property type="term" value="F:uracil phosphoribosyltransferase activity"/>
    <property type="evidence" value="ECO:0007669"/>
    <property type="project" value="UniProtKB-UniRule"/>
</dbReference>
<dbReference type="GO" id="GO:0044206">
    <property type="term" value="P:UMP salvage"/>
    <property type="evidence" value="ECO:0007669"/>
    <property type="project" value="UniProtKB-UniRule"/>
</dbReference>
<dbReference type="GO" id="GO:0006223">
    <property type="term" value="P:uracil salvage"/>
    <property type="evidence" value="ECO:0007669"/>
    <property type="project" value="InterPro"/>
</dbReference>
<dbReference type="CDD" id="cd06223">
    <property type="entry name" value="PRTases_typeI"/>
    <property type="match status" value="1"/>
</dbReference>
<dbReference type="Gene3D" id="3.40.50.2020">
    <property type="match status" value="1"/>
</dbReference>
<dbReference type="HAMAP" id="MF_01218_A">
    <property type="entry name" value="Upp_A"/>
    <property type="match status" value="1"/>
</dbReference>
<dbReference type="InterPro" id="IPR000836">
    <property type="entry name" value="PRibTrfase_dom"/>
</dbReference>
<dbReference type="InterPro" id="IPR029057">
    <property type="entry name" value="PRTase-like"/>
</dbReference>
<dbReference type="InterPro" id="IPR034331">
    <property type="entry name" value="Upp_A"/>
</dbReference>
<dbReference type="InterPro" id="IPR005765">
    <property type="entry name" value="Ura_phspho_trans"/>
</dbReference>
<dbReference type="NCBIfam" id="NF001097">
    <property type="entry name" value="PRK00129.1"/>
    <property type="match status" value="1"/>
</dbReference>
<dbReference type="NCBIfam" id="TIGR01091">
    <property type="entry name" value="upp"/>
    <property type="match status" value="1"/>
</dbReference>
<dbReference type="Pfam" id="PF14681">
    <property type="entry name" value="UPRTase"/>
    <property type="match status" value="1"/>
</dbReference>
<dbReference type="SUPFAM" id="SSF53271">
    <property type="entry name" value="PRTase-like"/>
    <property type="match status" value="1"/>
</dbReference>
<keyword id="KW-0021">Allosteric enzyme</keyword>
<keyword id="KW-0328">Glycosyltransferase</keyword>
<keyword id="KW-0342">GTP-binding</keyword>
<keyword id="KW-0460">Magnesium</keyword>
<keyword id="KW-0547">Nucleotide-binding</keyword>
<keyword id="KW-0808">Transferase</keyword>
<proteinExistence type="inferred from homology"/>
<evidence type="ECO:0000255" key="1">
    <source>
        <dbReference type="HAMAP-Rule" id="MF_01218"/>
    </source>
</evidence>
<reference key="1">
    <citation type="journal article" date="2009" name="Proc. Natl. Acad. Sci. U.S.A.">
        <title>Biogeography of the Sulfolobus islandicus pan-genome.</title>
        <authorList>
            <person name="Reno M.L."/>
            <person name="Held N.L."/>
            <person name="Fields C.J."/>
            <person name="Burke P.V."/>
            <person name="Whitaker R.J."/>
        </authorList>
    </citation>
    <scope>NUCLEOTIDE SEQUENCE [LARGE SCALE GENOMIC DNA]</scope>
    <source>
        <strain>M.14.25 / Kamchatka #1</strain>
    </source>
</reference>
<feature type="chain" id="PRO_1000213942" description="Uracil phosphoribosyltransferase">
    <location>
        <begin position="1"/>
        <end position="216"/>
    </location>
</feature>
<feature type="binding site" evidence="1">
    <location>
        <begin position="30"/>
        <end position="34"/>
    </location>
    <ligand>
        <name>GTP</name>
        <dbReference type="ChEBI" id="CHEBI:37565"/>
    </ligand>
</feature>
<feature type="binding site" evidence="1">
    <location>
        <position position="80"/>
    </location>
    <ligand>
        <name>5-phospho-alpha-D-ribose 1-diphosphate</name>
        <dbReference type="ChEBI" id="CHEBI:58017"/>
    </ligand>
</feature>
<feature type="binding site" evidence="1">
    <location>
        <position position="105"/>
    </location>
    <ligand>
        <name>5-phospho-alpha-D-ribose 1-diphosphate</name>
        <dbReference type="ChEBI" id="CHEBI:58017"/>
    </ligand>
</feature>
<feature type="binding site" evidence="1">
    <location>
        <begin position="140"/>
        <end position="148"/>
    </location>
    <ligand>
        <name>5-phospho-alpha-D-ribose 1-diphosphate</name>
        <dbReference type="ChEBI" id="CHEBI:58017"/>
    </ligand>
</feature>
<feature type="binding site" evidence="1">
    <location>
        <position position="203"/>
    </location>
    <ligand>
        <name>uracil</name>
        <dbReference type="ChEBI" id="CHEBI:17568"/>
    </ligand>
</feature>
<feature type="binding site" evidence="1">
    <location>
        <begin position="208"/>
        <end position="210"/>
    </location>
    <ligand>
        <name>uracil</name>
        <dbReference type="ChEBI" id="CHEBI:17568"/>
    </ligand>
</feature>
<feature type="binding site" evidence="1">
    <location>
        <position position="209"/>
    </location>
    <ligand>
        <name>5-phospho-alpha-D-ribose 1-diphosphate</name>
        <dbReference type="ChEBI" id="CHEBI:58017"/>
    </ligand>
</feature>
<organism>
    <name type="scientific">Saccharolobus islandicus (strain M.14.25 / Kamchatka #1)</name>
    <name type="common">Sulfolobus islandicus</name>
    <dbReference type="NCBI Taxonomy" id="427317"/>
    <lineage>
        <taxon>Archaea</taxon>
        <taxon>Thermoproteota</taxon>
        <taxon>Thermoprotei</taxon>
        <taxon>Sulfolobales</taxon>
        <taxon>Sulfolobaceae</taxon>
        <taxon>Saccharolobus</taxon>
    </lineage>
</organism>
<accession>C3MY92</accession>
<comment type="function">
    <text evidence="1">Catalyzes the conversion of uracil and 5-phospho-alpha-D-ribose 1-diphosphate (PRPP) to UMP and diphosphate.</text>
</comment>
<comment type="catalytic activity">
    <reaction evidence="1">
        <text>UMP + diphosphate = 5-phospho-alpha-D-ribose 1-diphosphate + uracil</text>
        <dbReference type="Rhea" id="RHEA:13017"/>
        <dbReference type="ChEBI" id="CHEBI:17568"/>
        <dbReference type="ChEBI" id="CHEBI:33019"/>
        <dbReference type="ChEBI" id="CHEBI:57865"/>
        <dbReference type="ChEBI" id="CHEBI:58017"/>
        <dbReference type="EC" id="2.4.2.9"/>
    </reaction>
</comment>
<comment type="cofactor">
    <cofactor evidence="1">
        <name>Mg(2+)</name>
        <dbReference type="ChEBI" id="CHEBI:18420"/>
    </cofactor>
    <text evidence="1">Binds 1 Mg(2+) ion per subunit. The magnesium is bound as Mg-PRPP.</text>
</comment>
<comment type="activity regulation">
    <text evidence="1">Allosterically activated by GTP.</text>
</comment>
<comment type="pathway">
    <text evidence="1">Pyrimidine metabolism; UMP biosynthesis via salvage pathway; UMP from uracil: step 1/1.</text>
</comment>
<comment type="similarity">
    <text evidence="1">Belongs to the UPRTase family.</text>
</comment>